<evidence type="ECO:0000255" key="1">
    <source>
        <dbReference type="HAMAP-Rule" id="MF_01004"/>
    </source>
</evidence>
<feature type="chain" id="PRO_1000201542" description="Vitamin B12 import system permease protein BtuC">
    <location>
        <begin position="1"/>
        <end position="326"/>
    </location>
</feature>
<feature type="transmembrane region" description="Helical" evidence="1">
    <location>
        <begin position="15"/>
        <end position="35"/>
    </location>
</feature>
<feature type="transmembrane region" description="Helical" evidence="1">
    <location>
        <begin position="61"/>
        <end position="81"/>
    </location>
</feature>
<feature type="transmembrane region" description="Helical" evidence="1">
    <location>
        <begin position="88"/>
        <end position="108"/>
    </location>
</feature>
<feature type="transmembrane region" description="Helical" evidence="1">
    <location>
        <begin position="112"/>
        <end position="132"/>
    </location>
</feature>
<feature type="transmembrane region" description="Helical" evidence="1">
    <location>
        <begin position="146"/>
        <end position="166"/>
    </location>
</feature>
<feature type="transmembrane region" description="Helical" evidence="1">
    <location>
        <begin position="184"/>
        <end position="204"/>
    </location>
</feature>
<feature type="transmembrane region" description="Helical" evidence="1">
    <location>
        <begin position="240"/>
        <end position="260"/>
    </location>
</feature>
<feature type="transmembrane region" description="Helical" evidence="1">
    <location>
        <begin position="274"/>
        <end position="294"/>
    </location>
</feature>
<feature type="transmembrane region" description="Helical" evidence="1">
    <location>
        <begin position="302"/>
        <end position="322"/>
    </location>
</feature>
<protein>
    <recommendedName>
        <fullName evidence="1">Vitamin B12 import system permease protein BtuC</fullName>
    </recommendedName>
</protein>
<proteinExistence type="inferred from homology"/>
<reference key="1">
    <citation type="journal article" date="2008" name="J. Bacteriol.">
        <title>The complete genome sequence of Escherichia coli DH10B: insights into the biology of a laboratory workhorse.</title>
        <authorList>
            <person name="Durfee T."/>
            <person name="Nelson R."/>
            <person name="Baldwin S."/>
            <person name="Plunkett G. III"/>
            <person name="Burland V."/>
            <person name="Mau B."/>
            <person name="Petrosino J.F."/>
            <person name="Qin X."/>
            <person name="Muzny D.M."/>
            <person name="Ayele M."/>
            <person name="Gibbs R.A."/>
            <person name="Csorgo B."/>
            <person name="Posfai G."/>
            <person name="Weinstock G.M."/>
            <person name="Blattner F.R."/>
        </authorList>
    </citation>
    <scope>NUCLEOTIDE SEQUENCE [LARGE SCALE GENOMIC DNA]</scope>
    <source>
        <strain>K12 / DH10B</strain>
    </source>
</reference>
<name>BTUC_ECODH</name>
<keyword id="KW-0997">Cell inner membrane</keyword>
<keyword id="KW-1003">Cell membrane</keyword>
<keyword id="KW-0472">Membrane</keyword>
<keyword id="KW-0812">Transmembrane</keyword>
<keyword id="KW-1133">Transmembrane helix</keyword>
<keyword id="KW-0813">Transport</keyword>
<gene>
    <name evidence="1" type="primary">btuC</name>
    <name type="ordered locus">ECDH10B_1847</name>
</gene>
<sequence>MLTLARQQQRQNIRWLLCLSVLMLLALLLSLCAGEQWISPGDWFTPRGELFVWQIRLPRTLAVLLVGAALAISGAVMQALFENPLAEPGLLGVSNGAGVGLIAAVLLGQGQLPNWALGLCAIAGALIITLILLRFARRHLSTSRLLLAGVALGIICSALMTWAIYFSTSVDLRQLMYWMMGGFGGVDWRQSWLMLALIPVLLWICCQSRPMNMLALGEISARQLGLPLWFWRNVLVAATGWMVGVSVALAGAIGFIGLVIPHILRLCGLTDHRVLLPGCALAGASALLLADIVARLALAAAELPIGVVTATLGAPVFIWLLLKAGR</sequence>
<accession>B1XG18</accession>
<comment type="function">
    <text evidence="1">Part of the ABC transporter complex BtuCDF involved in vitamin B12 import. Involved in the translocation of the substrate across the membrane.</text>
</comment>
<comment type="subunit">
    <text evidence="1">The complex is composed of two ATP-binding proteins (BtuD), two transmembrane proteins (BtuC) and a solute-binding protein (BtuF).</text>
</comment>
<comment type="subcellular location">
    <subcellularLocation>
        <location evidence="1">Cell inner membrane</location>
        <topology evidence="1">Multi-pass membrane protein</topology>
    </subcellularLocation>
</comment>
<comment type="similarity">
    <text evidence="1">Belongs to the binding-protein-dependent transport system permease family. FecCD subfamily.</text>
</comment>
<dbReference type="EMBL" id="CP000948">
    <property type="protein sequence ID" value="ACB02912.1"/>
    <property type="molecule type" value="Genomic_DNA"/>
</dbReference>
<dbReference type="RefSeq" id="WP_000956528.1">
    <property type="nucleotide sequence ID" value="NC_010473.1"/>
</dbReference>
<dbReference type="SMR" id="B1XG18"/>
<dbReference type="KEGG" id="ecd:ECDH10B_1847"/>
<dbReference type="HOGENOM" id="CLU_013016_0_3_6"/>
<dbReference type="GO" id="GO:0005886">
    <property type="term" value="C:plasma membrane"/>
    <property type="evidence" value="ECO:0007669"/>
    <property type="project" value="UniProtKB-SubCell"/>
</dbReference>
<dbReference type="GO" id="GO:0090482">
    <property type="term" value="F:vitamin transmembrane transporter activity"/>
    <property type="evidence" value="ECO:0007669"/>
    <property type="project" value="UniProtKB-UniRule"/>
</dbReference>
<dbReference type="GO" id="GO:0015889">
    <property type="term" value="P:cobalamin transport"/>
    <property type="evidence" value="ECO:0007669"/>
    <property type="project" value="UniProtKB-UniRule"/>
</dbReference>
<dbReference type="CDD" id="cd06550">
    <property type="entry name" value="TM_ABC_iron-siderophores_like"/>
    <property type="match status" value="1"/>
</dbReference>
<dbReference type="FunFam" id="1.10.3470.10:FF:000001">
    <property type="entry name" value="Vitamin B12 ABC transporter permease BtuC"/>
    <property type="match status" value="1"/>
</dbReference>
<dbReference type="Gene3D" id="1.10.3470.10">
    <property type="entry name" value="ABC transporter involved in vitamin B12 uptake, BtuC"/>
    <property type="match status" value="1"/>
</dbReference>
<dbReference type="HAMAP" id="MF_01004">
    <property type="entry name" value="BtuC"/>
    <property type="match status" value="1"/>
</dbReference>
<dbReference type="InterPro" id="IPR037294">
    <property type="entry name" value="ABC_BtuC-like"/>
</dbReference>
<dbReference type="InterPro" id="IPR023691">
    <property type="entry name" value="ABC_transptr_BtuC"/>
</dbReference>
<dbReference type="InterPro" id="IPR000522">
    <property type="entry name" value="ABC_transptr_permease_BtuC"/>
</dbReference>
<dbReference type="NCBIfam" id="NF003001">
    <property type="entry name" value="PRK03784.1"/>
    <property type="match status" value="1"/>
</dbReference>
<dbReference type="PANTHER" id="PTHR30472">
    <property type="entry name" value="FERRIC ENTEROBACTIN TRANSPORT SYSTEM PERMEASE PROTEIN"/>
    <property type="match status" value="1"/>
</dbReference>
<dbReference type="PANTHER" id="PTHR30472:SF29">
    <property type="entry name" value="VITAMIN B12 IMPORT SYSTEM PERMEASE PROTEIN BTUC"/>
    <property type="match status" value="1"/>
</dbReference>
<dbReference type="Pfam" id="PF01032">
    <property type="entry name" value="FecCD"/>
    <property type="match status" value="1"/>
</dbReference>
<dbReference type="SUPFAM" id="SSF81345">
    <property type="entry name" value="ABC transporter involved in vitamin B12 uptake, BtuC"/>
    <property type="match status" value="1"/>
</dbReference>
<organism>
    <name type="scientific">Escherichia coli (strain K12 / DH10B)</name>
    <dbReference type="NCBI Taxonomy" id="316385"/>
    <lineage>
        <taxon>Bacteria</taxon>
        <taxon>Pseudomonadati</taxon>
        <taxon>Pseudomonadota</taxon>
        <taxon>Gammaproteobacteria</taxon>
        <taxon>Enterobacterales</taxon>
        <taxon>Enterobacteriaceae</taxon>
        <taxon>Escherichia</taxon>
    </lineage>
</organism>